<name>BIOF_NEIG1</name>
<dbReference type="EC" id="2.3.1.47"/>
<dbReference type="EMBL" id="AE004969">
    <property type="protein sequence ID" value="AAW90121.1"/>
    <property type="molecule type" value="Genomic_DNA"/>
</dbReference>
<dbReference type="RefSeq" id="WP_010951279.1">
    <property type="nucleotide sequence ID" value="NC_002946.2"/>
</dbReference>
<dbReference type="RefSeq" id="YP_208533.1">
    <property type="nucleotide sequence ID" value="NC_002946.2"/>
</dbReference>
<dbReference type="SMR" id="Q5F6R6"/>
<dbReference type="STRING" id="242231.NGO_1483"/>
<dbReference type="KEGG" id="ngo:NGO_1483"/>
<dbReference type="PATRIC" id="fig|242231.10.peg.1755"/>
<dbReference type="HOGENOM" id="CLU_015846_11_2_4"/>
<dbReference type="UniPathway" id="UPA00078"/>
<dbReference type="Proteomes" id="UP000000535">
    <property type="component" value="Chromosome"/>
</dbReference>
<dbReference type="GO" id="GO:0008710">
    <property type="term" value="F:8-amino-7-oxononanoate synthase activity"/>
    <property type="evidence" value="ECO:0007669"/>
    <property type="project" value="UniProtKB-EC"/>
</dbReference>
<dbReference type="GO" id="GO:0030170">
    <property type="term" value="F:pyridoxal phosphate binding"/>
    <property type="evidence" value="ECO:0007669"/>
    <property type="project" value="InterPro"/>
</dbReference>
<dbReference type="GO" id="GO:0009102">
    <property type="term" value="P:biotin biosynthetic process"/>
    <property type="evidence" value="ECO:0007669"/>
    <property type="project" value="UniProtKB-UniPathway"/>
</dbReference>
<dbReference type="CDD" id="cd06454">
    <property type="entry name" value="KBL_like"/>
    <property type="match status" value="1"/>
</dbReference>
<dbReference type="Gene3D" id="3.90.1150.10">
    <property type="entry name" value="Aspartate Aminotransferase, domain 1"/>
    <property type="match status" value="1"/>
</dbReference>
<dbReference type="Gene3D" id="3.40.640.10">
    <property type="entry name" value="Type I PLP-dependent aspartate aminotransferase-like (Major domain)"/>
    <property type="match status" value="1"/>
</dbReference>
<dbReference type="InterPro" id="IPR001917">
    <property type="entry name" value="Aminotrans_II_pyridoxalP_BS"/>
</dbReference>
<dbReference type="InterPro" id="IPR004839">
    <property type="entry name" value="Aminotransferase_I/II_large"/>
</dbReference>
<dbReference type="InterPro" id="IPR050087">
    <property type="entry name" value="AON_synthase_class-II"/>
</dbReference>
<dbReference type="InterPro" id="IPR004723">
    <property type="entry name" value="AONS_Archaea/Proteobacteria"/>
</dbReference>
<dbReference type="InterPro" id="IPR015424">
    <property type="entry name" value="PyrdxlP-dep_Trfase"/>
</dbReference>
<dbReference type="InterPro" id="IPR015421">
    <property type="entry name" value="PyrdxlP-dep_Trfase_major"/>
</dbReference>
<dbReference type="InterPro" id="IPR015422">
    <property type="entry name" value="PyrdxlP-dep_Trfase_small"/>
</dbReference>
<dbReference type="NCBIfam" id="TIGR00858">
    <property type="entry name" value="bioF"/>
    <property type="match status" value="1"/>
</dbReference>
<dbReference type="PANTHER" id="PTHR13693:SF100">
    <property type="entry name" value="8-AMINO-7-OXONONANOATE SYNTHASE"/>
    <property type="match status" value="1"/>
</dbReference>
<dbReference type="PANTHER" id="PTHR13693">
    <property type="entry name" value="CLASS II AMINOTRANSFERASE/8-AMINO-7-OXONONANOATE SYNTHASE"/>
    <property type="match status" value="1"/>
</dbReference>
<dbReference type="Pfam" id="PF00155">
    <property type="entry name" value="Aminotran_1_2"/>
    <property type="match status" value="1"/>
</dbReference>
<dbReference type="SUPFAM" id="SSF53383">
    <property type="entry name" value="PLP-dependent transferases"/>
    <property type="match status" value="1"/>
</dbReference>
<dbReference type="PROSITE" id="PS00599">
    <property type="entry name" value="AA_TRANSFER_CLASS_2"/>
    <property type="match status" value="1"/>
</dbReference>
<organism>
    <name type="scientific">Neisseria gonorrhoeae (strain ATCC 700825 / FA 1090)</name>
    <dbReference type="NCBI Taxonomy" id="242231"/>
    <lineage>
        <taxon>Bacteria</taxon>
        <taxon>Pseudomonadati</taxon>
        <taxon>Pseudomonadota</taxon>
        <taxon>Betaproteobacteria</taxon>
        <taxon>Neisseriales</taxon>
        <taxon>Neisseriaceae</taxon>
        <taxon>Neisseria</taxon>
    </lineage>
</organism>
<feature type="chain" id="PRO_0000381048" description="Putative 8-amino-7-oxononanoate synthase">
    <location>
        <begin position="1"/>
        <end position="380"/>
    </location>
</feature>
<feature type="binding site" evidence="1">
    <location>
        <position position="18"/>
    </location>
    <ligand>
        <name>substrate</name>
    </ligand>
</feature>
<feature type="binding site" evidence="1">
    <location>
        <begin position="106"/>
        <end position="107"/>
    </location>
    <ligand>
        <name>pyridoxal 5'-phosphate</name>
        <dbReference type="ChEBI" id="CHEBI:597326"/>
    </ligand>
</feature>
<feature type="binding site" evidence="1">
    <location>
        <position position="131"/>
    </location>
    <ligand>
        <name>substrate</name>
    </ligand>
</feature>
<feature type="binding site" evidence="1">
    <location>
        <position position="179"/>
    </location>
    <ligand>
        <name>pyridoxal 5'-phosphate</name>
        <dbReference type="ChEBI" id="CHEBI:597326"/>
    </ligand>
</feature>
<feature type="binding site" evidence="1">
    <location>
        <begin position="205"/>
        <end position="208"/>
    </location>
    <ligand>
        <name>pyridoxal 5'-phosphate</name>
        <dbReference type="ChEBI" id="CHEBI:597326"/>
    </ligand>
</feature>
<feature type="binding site" evidence="1">
    <location>
        <begin position="236"/>
        <end position="239"/>
    </location>
    <ligand>
        <name>pyridoxal 5'-phosphate</name>
        <dbReference type="ChEBI" id="CHEBI:597326"/>
    </ligand>
</feature>
<feature type="binding site" evidence="1">
    <location>
        <position position="352"/>
    </location>
    <ligand>
        <name>substrate</name>
    </ligand>
</feature>
<feature type="modified residue" description="N6-(pyridoxal phosphate)lysine" evidence="1">
    <location>
        <position position="239"/>
    </location>
</feature>
<reference key="1">
    <citation type="submission" date="2003-03" db="EMBL/GenBank/DDBJ databases">
        <title>The complete genome sequence of Neisseria gonorrhoeae.</title>
        <authorList>
            <person name="Lewis L.A."/>
            <person name="Gillaspy A.F."/>
            <person name="McLaughlin R.E."/>
            <person name="Gipson M."/>
            <person name="Ducey T.F."/>
            <person name="Ownbey T."/>
            <person name="Hartman K."/>
            <person name="Nydick C."/>
            <person name="Carson M.B."/>
            <person name="Vaughn J."/>
            <person name="Thomson C."/>
            <person name="Song L."/>
            <person name="Lin S."/>
            <person name="Yuan X."/>
            <person name="Najar F."/>
            <person name="Zhan M."/>
            <person name="Ren Q."/>
            <person name="Zhu H."/>
            <person name="Qi S."/>
            <person name="Kenton S.M."/>
            <person name="Lai H."/>
            <person name="White J.D."/>
            <person name="Clifton S."/>
            <person name="Roe B.A."/>
            <person name="Dyer D.W."/>
        </authorList>
    </citation>
    <scope>NUCLEOTIDE SEQUENCE [LARGE SCALE GENOMIC DNA]</scope>
    <source>
        <strain>ATCC 700825 / FA 1090</strain>
    </source>
</reference>
<accession>Q5F6R6</accession>
<evidence type="ECO:0000250" key="1"/>
<evidence type="ECO:0000305" key="2"/>
<proteinExistence type="inferred from homology"/>
<comment type="function">
    <text evidence="1">Catalyzes the decarboxylative condensation of pimeloyl-[acyl-carrier protein] and L-alanine to produce 8-amino-7-oxononanoate (AON), [acyl-carrier protein], and carbon dioxide.</text>
</comment>
<comment type="catalytic activity">
    <reaction>
        <text>6-carboxyhexanoyl-[ACP] + L-alanine + H(+) = (8S)-8-amino-7-oxononanoate + holo-[ACP] + CO2</text>
        <dbReference type="Rhea" id="RHEA:42288"/>
        <dbReference type="Rhea" id="RHEA-COMP:9685"/>
        <dbReference type="Rhea" id="RHEA-COMP:9955"/>
        <dbReference type="ChEBI" id="CHEBI:15378"/>
        <dbReference type="ChEBI" id="CHEBI:16526"/>
        <dbReference type="ChEBI" id="CHEBI:57972"/>
        <dbReference type="ChEBI" id="CHEBI:64479"/>
        <dbReference type="ChEBI" id="CHEBI:78846"/>
        <dbReference type="ChEBI" id="CHEBI:149468"/>
        <dbReference type="EC" id="2.3.1.47"/>
    </reaction>
</comment>
<comment type="cofactor">
    <cofactor evidence="1">
        <name>pyridoxal 5'-phosphate</name>
        <dbReference type="ChEBI" id="CHEBI:597326"/>
    </cofactor>
</comment>
<comment type="pathway">
    <text>Cofactor biosynthesis; biotin biosynthesis.</text>
</comment>
<comment type="subunit">
    <text evidence="1">Homodimer.</text>
</comment>
<comment type="similarity">
    <text evidence="2">Belongs to the class-II pyridoxal-phosphate-dependent aminotransferase family. BioF subfamily.</text>
</comment>
<protein>
    <recommendedName>
        <fullName>Putative 8-amino-7-oxononanoate synthase</fullName>
        <shortName>AONS</shortName>
        <ecNumber>2.3.1.47</ecNumber>
    </recommendedName>
    <alternativeName>
        <fullName>7-keto-8-amino-pelargonic acid synthase</fullName>
        <shortName>7-KAP synthase</shortName>
    </alternativeName>
    <alternativeName>
        <fullName>8-amino-7-ketopelargonate synthase</fullName>
    </alternativeName>
</protein>
<keyword id="KW-0093">Biotin biosynthesis</keyword>
<keyword id="KW-0663">Pyridoxal phosphate</keyword>
<keyword id="KW-1185">Reference proteome</keyword>
<keyword id="KW-0808">Transferase</keyword>
<gene>
    <name type="primary">bioF</name>
    <name type="ordered locus">NGO_1483</name>
</gene>
<sequence>MKVFRQQLEQLGAQNQYRSIPDLIHQGRYITRENRKMLNMSSNDYLGLASDENLRRSFLQQYGGNFPSFTSSSSRLLTGNFPIYTDLEELVAQRFQRESALLFNSGYHANLGILPALTTTKSLILADKFVHASMIDGIRLSRCAFFRYRHNDYEHLKNLLEKNVGKFDRTFIVTESVFSMDGDVADLKQLVQLKKQFPNTYLYVDEAHAIGVYGQNGLGIAERDNLIAEIDLLVGTFGKALASVGAYAVCNQVLKECLINQMRPLIFSTALPPFNVAWTYFIFERLPQFSKERSHLEQLSAFLRREVAHRTQIMPSETCIVPYILGGNEATLAKAEYLQGQGYYCLPIGPPTVPKNTSRIRLSLTADMTTDEVRQFAACL</sequence>